<evidence type="ECO:0000255" key="1">
    <source>
        <dbReference type="HAMAP-Rule" id="MF_00033"/>
    </source>
</evidence>
<feature type="chain" id="PRO_0000315137" description="UDP-N-acetylglucosamine--N-acetylmuramyl-(pentapeptide) pyrophosphoryl-undecaprenol N-acetylglucosamine transferase">
    <location>
        <begin position="1"/>
        <end position="363"/>
    </location>
</feature>
<feature type="binding site" evidence="1">
    <location>
        <begin position="14"/>
        <end position="16"/>
    </location>
    <ligand>
        <name>UDP-N-acetyl-alpha-D-glucosamine</name>
        <dbReference type="ChEBI" id="CHEBI:57705"/>
    </ligand>
</feature>
<feature type="binding site" evidence="1">
    <location>
        <position position="122"/>
    </location>
    <ligand>
        <name>UDP-N-acetyl-alpha-D-glucosamine</name>
        <dbReference type="ChEBI" id="CHEBI:57705"/>
    </ligand>
</feature>
<feature type="binding site" evidence="1">
    <location>
        <position position="163"/>
    </location>
    <ligand>
        <name>UDP-N-acetyl-alpha-D-glucosamine</name>
        <dbReference type="ChEBI" id="CHEBI:57705"/>
    </ligand>
</feature>
<feature type="binding site" evidence="1">
    <location>
        <position position="190"/>
    </location>
    <ligand>
        <name>UDP-N-acetyl-alpha-D-glucosamine</name>
        <dbReference type="ChEBI" id="CHEBI:57705"/>
    </ligand>
</feature>
<feature type="binding site" evidence="1">
    <location>
        <position position="285"/>
    </location>
    <ligand>
        <name>UDP-N-acetyl-alpha-D-glucosamine</name>
        <dbReference type="ChEBI" id="CHEBI:57705"/>
    </ligand>
</feature>
<comment type="function">
    <text evidence="1">Cell wall formation. Catalyzes the transfer of a GlcNAc subunit on undecaprenyl-pyrophosphoryl-MurNAc-pentapeptide (lipid intermediate I) to form undecaprenyl-pyrophosphoryl-MurNAc-(pentapeptide)GlcNAc (lipid intermediate II).</text>
</comment>
<comment type="catalytic activity">
    <reaction evidence="1">
        <text>di-trans,octa-cis-undecaprenyl diphospho-N-acetyl-alpha-D-muramoyl-L-alanyl-D-glutamyl-meso-2,6-diaminopimeloyl-D-alanyl-D-alanine + UDP-N-acetyl-alpha-D-glucosamine = di-trans,octa-cis-undecaprenyl diphospho-[N-acetyl-alpha-D-glucosaminyl-(1-&gt;4)]-N-acetyl-alpha-D-muramoyl-L-alanyl-D-glutamyl-meso-2,6-diaminopimeloyl-D-alanyl-D-alanine + UDP + H(+)</text>
        <dbReference type="Rhea" id="RHEA:31227"/>
        <dbReference type="ChEBI" id="CHEBI:15378"/>
        <dbReference type="ChEBI" id="CHEBI:57705"/>
        <dbReference type="ChEBI" id="CHEBI:58223"/>
        <dbReference type="ChEBI" id="CHEBI:61387"/>
        <dbReference type="ChEBI" id="CHEBI:61388"/>
        <dbReference type="EC" id="2.4.1.227"/>
    </reaction>
</comment>
<comment type="pathway">
    <text evidence="1">Cell wall biogenesis; peptidoglycan biosynthesis.</text>
</comment>
<comment type="subcellular location">
    <subcellularLocation>
        <location evidence="1">Cell inner membrane</location>
        <topology evidence="1">Peripheral membrane protein</topology>
        <orientation evidence="1">Cytoplasmic side</orientation>
    </subcellularLocation>
</comment>
<comment type="similarity">
    <text evidence="1">Belongs to the glycosyltransferase 28 family. MurG subfamily.</text>
</comment>
<dbReference type="EC" id="2.4.1.227" evidence="1"/>
<dbReference type="EMBL" id="CP000551">
    <property type="protein sequence ID" value="ABM69503.1"/>
    <property type="molecule type" value="Genomic_DNA"/>
</dbReference>
<dbReference type="RefSeq" id="WP_011817690.1">
    <property type="nucleotide sequence ID" value="NC_008816.1"/>
</dbReference>
<dbReference type="SMR" id="A2BNZ2"/>
<dbReference type="STRING" id="146891.A9601_02151"/>
<dbReference type="CAZy" id="GT28">
    <property type="family name" value="Glycosyltransferase Family 28"/>
</dbReference>
<dbReference type="KEGG" id="pmb:A9601_02151"/>
<dbReference type="eggNOG" id="COG0707">
    <property type="taxonomic scope" value="Bacteria"/>
</dbReference>
<dbReference type="HOGENOM" id="CLU_037404_0_0_3"/>
<dbReference type="OrthoDB" id="9808936at2"/>
<dbReference type="UniPathway" id="UPA00219"/>
<dbReference type="Proteomes" id="UP000002590">
    <property type="component" value="Chromosome"/>
</dbReference>
<dbReference type="GO" id="GO:0005886">
    <property type="term" value="C:plasma membrane"/>
    <property type="evidence" value="ECO:0007669"/>
    <property type="project" value="UniProtKB-SubCell"/>
</dbReference>
<dbReference type="GO" id="GO:0051991">
    <property type="term" value="F:UDP-N-acetyl-D-glucosamine:N-acetylmuramoyl-L-alanyl-D-glutamyl-meso-2,6-diaminopimelyl-D-alanyl-D-alanine-diphosphoundecaprenol 4-beta-N-acetylglucosaminlytransferase activity"/>
    <property type="evidence" value="ECO:0007669"/>
    <property type="project" value="RHEA"/>
</dbReference>
<dbReference type="GO" id="GO:0050511">
    <property type="term" value="F:undecaprenyldiphospho-muramoylpentapeptide beta-N-acetylglucosaminyltransferase activity"/>
    <property type="evidence" value="ECO:0007669"/>
    <property type="project" value="UniProtKB-UniRule"/>
</dbReference>
<dbReference type="GO" id="GO:0005975">
    <property type="term" value="P:carbohydrate metabolic process"/>
    <property type="evidence" value="ECO:0007669"/>
    <property type="project" value="InterPro"/>
</dbReference>
<dbReference type="GO" id="GO:0051301">
    <property type="term" value="P:cell division"/>
    <property type="evidence" value="ECO:0007669"/>
    <property type="project" value="UniProtKB-KW"/>
</dbReference>
<dbReference type="GO" id="GO:0071555">
    <property type="term" value="P:cell wall organization"/>
    <property type="evidence" value="ECO:0007669"/>
    <property type="project" value="UniProtKB-KW"/>
</dbReference>
<dbReference type="GO" id="GO:0030259">
    <property type="term" value="P:lipid glycosylation"/>
    <property type="evidence" value="ECO:0007669"/>
    <property type="project" value="UniProtKB-UniRule"/>
</dbReference>
<dbReference type="GO" id="GO:0009252">
    <property type="term" value="P:peptidoglycan biosynthetic process"/>
    <property type="evidence" value="ECO:0007669"/>
    <property type="project" value="UniProtKB-UniRule"/>
</dbReference>
<dbReference type="GO" id="GO:0008360">
    <property type="term" value="P:regulation of cell shape"/>
    <property type="evidence" value="ECO:0007669"/>
    <property type="project" value="UniProtKB-KW"/>
</dbReference>
<dbReference type="CDD" id="cd03785">
    <property type="entry name" value="GT28_MurG"/>
    <property type="match status" value="1"/>
</dbReference>
<dbReference type="Gene3D" id="3.40.50.2000">
    <property type="entry name" value="Glycogen Phosphorylase B"/>
    <property type="match status" value="2"/>
</dbReference>
<dbReference type="HAMAP" id="MF_00033">
    <property type="entry name" value="MurG"/>
    <property type="match status" value="1"/>
</dbReference>
<dbReference type="InterPro" id="IPR006009">
    <property type="entry name" value="GlcNAc_MurG"/>
</dbReference>
<dbReference type="InterPro" id="IPR007235">
    <property type="entry name" value="Glyco_trans_28_C"/>
</dbReference>
<dbReference type="InterPro" id="IPR004276">
    <property type="entry name" value="GlycoTrans_28_N"/>
</dbReference>
<dbReference type="NCBIfam" id="TIGR01133">
    <property type="entry name" value="murG"/>
    <property type="match status" value="1"/>
</dbReference>
<dbReference type="PANTHER" id="PTHR21015:SF22">
    <property type="entry name" value="GLYCOSYLTRANSFERASE"/>
    <property type="match status" value="1"/>
</dbReference>
<dbReference type="PANTHER" id="PTHR21015">
    <property type="entry name" value="UDP-N-ACETYLGLUCOSAMINE--N-ACETYLMURAMYL-(PENTAPEPTIDE) PYROPHOSPHORYL-UNDECAPRENOL N-ACETYLGLUCOSAMINE TRANSFERASE 1"/>
    <property type="match status" value="1"/>
</dbReference>
<dbReference type="Pfam" id="PF04101">
    <property type="entry name" value="Glyco_tran_28_C"/>
    <property type="match status" value="1"/>
</dbReference>
<dbReference type="Pfam" id="PF03033">
    <property type="entry name" value="Glyco_transf_28"/>
    <property type="match status" value="1"/>
</dbReference>
<dbReference type="SUPFAM" id="SSF53756">
    <property type="entry name" value="UDP-Glycosyltransferase/glycogen phosphorylase"/>
    <property type="match status" value="1"/>
</dbReference>
<sequence length="363" mass="41600">MSKKNNLLVAASGTGGHIFPALAVSKEVEDEWNIHWLGIQQRLDANLIPQKYNLKTLNLKTPRKNIFLFYQYIKILMSTFQIIRILKEKKINLVFTTGGYISAPTIVASKILKIPIIIHESNVVPGMVTKYFGFLCNYVLLGFKETNSYLKNCKTIFTGTPLREQFYKFNFLPEWVPKGNGPLLIVMGGSQGAKAINQILYESLEFLIKKQFRIVHIVGESHLKTFHVKNSKNYIQKKFTNEIAALIQNCDLVISRSGAGTINELMEAEKPSILIPYPYSKNNHQEKNAMILAASGGSVLINQNNMSKEVFEETLERIFKIKSKKGKKNYEILDLMKKNMENNNKIKSKNEIKKYIDYFLKEF</sequence>
<reference key="1">
    <citation type="journal article" date="2007" name="PLoS Genet.">
        <title>Patterns and implications of gene gain and loss in the evolution of Prochlorococcus.</title>
        <authorList>
            <person name="Kettler G.C."/>
            <person name="Martiny A.C."/>
            <person name="Huang K."/>
            <person name="Zucker J."/>
            <person name="Coleman M.L."/>
            <person name="Rodrigue S."/>
            <person name="Chen F."/>
            <person name="Lapidus A."/>
            <person name="Ferriera S."/>
            <person name="Johnson J."/>
            <person name="Steglich C."/>
            <person name="Church G.M."/>
            <person name="Richardson P."/>
            <person name="Chisholm S.W."/>
        </authorList>
    </citation>
    <scope>NUCLEOTIDE SEQUENCE [LARGE SCALE GENOMIC DNA]</scope>
    <source>
        <strain>AS9601</strain>
    </source>
</reference>
<keyword id="KW-0131">Cell cycle</keyword>
<keyword id="KW-0132">Cell division</keyword>
<keyword id="KW-0997">Cell inner membrane</keyword>
<keyword id="KW-1003">Cell membrane</keyword>
<keyword id="KW-0133">Cell shape</keyword>
<keyword id="KW-0961">Cell wall biogenesis/degradation</keyword>
<keyword id="KW-0328">Glycosyltransferase</keyword>
<keyword id="KW-0472">Membrane</keyword>
<keyword id="KW-0573">Peptidoglycan synthesis</keyword>
<keyword id="KW-0808">Transferase</keyword>
<name>MURG_PROMS</name>
<gene>
    <name evidence="1" type="primary">murG</name>
    <name type="ordered locus">A9601_02151</name>
</gene>
<protein>
    <recommendedName>
        <fullName evidence="1">UDP-N-acetylglucosamine--N-acetylmuramyl-(pentapeptide) pyrophosphoryl-undecaprenol N-acetylglucosamine transferase</fullName>
        <ecNumber evidence="1">2.4.1.227</ecNumber>
    </recommendedName>
    <alternativeName>
        <fullName evidence="1">Undecaprenyl-PP-MurNAc-pentapeptide-UDPGlcNAc GlcNAc transferase</fullName>
    </alternativeName>
</protein>
<organism>
    <name type="scientific">Prochlorococcus marinus (strain AS9601)</name>
    <dbReference type="NCBI Taxonomy" id="146891"/>
    <lineage>
        <taxon>Bacteria</taxon>
        <taxon>Bacillati</taxon>
        <taxon>Cyanobacteriota</taxon>
        <taxon>Cyanophyceae</taxon>
        <taxon>Synechococcales</taxon>
        <taxon>Prochlorococcaceae</taxon>
        <taxon>Prochlorococcus</taxon>
    </lineage>
</organism>
<accession>A2BNZ2</accession>
<proteinExistence type="inferred from homology"/>